<accession>Q18775</accession>
<dbReference type="EMBL" id="FO080675">
    <property type="protein sequence ID" value="CCD65696.1"/>
    <property type="molecule type" value="Genomic_DNA"/>
</dbReference>
<dbReference type="PIR" id="T15819">
    <property type="entry name" value="T15819"/>
</dbReference>
<dbReference type="RefSeq" id="NP_508238.2">
    <property type="nucleotide sequence ID" value="NM_075837.5"/>
</dbReference>
<dbReference type="FunCoup" id="Q18775">
    <property type="interactions" value="106"/>
</dbReference>
<dbReference type="STRING" id="6239.C52B11.3.1"/>
<dbReference type="GlyCosmos" id="Q18775">
    <property type="glycosylation" value="2 sites, No reported glycans"/>
</dbReference>
<dbReference type="PaxDb" id="6239-C52B11.3"/>
<dbReference type="EnsemblMetazoa" id="C52B11.3.1">
    <property type="protein sequence ID" value="C52B11.3.1"/>
    <property type="gene ID" value="WBGene00016872"/>
</dbReference>
<dbReference type="GeneID" id="183715"/>
<dbReference type="KEGG" id="cel:CELE_C52B11.3"/>
<dbReference type="UCSC" id="C52B11.3">
    <property type="organism name" value="c. elegans"/>
</dbReference>
<dbReference type="AGR" id="WB:WBGene00016872"/>
<dbReference type="CTD" id="183715"/>
<dbReference type="WormBase" id="C52B11.3">
    <property type="protein sequence ID" value="CE39139"/>
    <property type="gene ID" value="WBGene00016872"/>
    <property type="gene designation" value="dop-4"/>
</dbReference>
<dbReference type="eggNOG" id="KOG3656">
    <property type="taxonomic scope" value="Eukaryota"/>
</dbReference>
<dbReference type="GeneTree" id="ENSGT00940000154484"/>
<dbReference type="HOGENOM" id="CLU_009579_11_1_1"/>
<dbReference type="InParanoid" id="Q18775"/>
<dbReference type="OMA" id="PIGYRDK"/>
<dbReference type="OrthoDB" id="5951059at2759"/>
<dbReference type="PhylomeDB" id="Q18775"/>
<dbReference type="PRO" id="PR:Q18775"/>
<dbReference type="Proteomes" id="UP000001940">
    <property type="component" value="Chromosome X"/>
</dbReference>
<dbReference type="Bgee" id="WBGene00016872">
    <property type="expression patterns" value="Expressed in embryo and 2 other cell types or tissues"/>
</dbReference>
<dbReference type="GO" id="GO:0030425">
    <property type="term" value="C:dendrite"/>
    <property type="evidence" value="ECO:0000318"/>
    <property type="project" value="GO_Central"/>
</dbReference>
<dbReference type="GO" id="GO:0005886">
    <property type="term" value="C:plasma membrane"/>
    <property type="evidence" value="ECO:0000318"/>
    <property type="project" value="GO_Central"/>
</dbReference>
<dbReference type="GO" id="GO:0045211">
    <property type="term" value="C:postsynaptic membrane"/>
    <property type="evidence" value="ECO:0000305"/>
    <property type="project" value="WormBase"/>
</dbReference>
<dbReference type="GO" id="GO:0004952">
    <property type="term" value="F:dopamine neurotransmitter receptor activity"/>
    <property type="evidence" value="ECO:0000314"/>
    <property type="project" value="WormBase"/>
</dbReference>
<dbReference type="GO" id="GO:0004993">
    <property type="term" value="F:G protein-coupled serotonin receptor activity"/>
    <property type="evidence" value="ECO:0000318"/>
    <property type="project" value="GO_Central"/>
</dbReference>
<dbReference type="GO" id="GO:0030594">
    <property type="term" value="F:neurotransmitter receptor activity"/>
    <property type="evidence" value="ECO:0000318"/>
    <property type="project" value="GO_Central"/>
</dbReference>
<dbReference type="GO" id="GO:0007191">
    <property type="term" value="P:adenylate cyclase-activating dopamine receptor signaling pathway"/>
    <property type="evidence" value="ECO:0000314"/>
    <property type="project" value="WormBase"/>
</dbReference>
<dbReference type="GO" id="GO:0007198">
    <property type="term" value="P:adenylate cyclase-inhibiting serotonin receptor signaling pathway"/>
    <property type="evidence" value="ECO:0000318"/>
    <property type="project" value="GO_Central"/>
</dbReference>
<dbReference type="GO" id="GO:0007268">
    <property type="term" value="P:chemical synaptic transmission"/>
    <property type="evidence" value="ECO:0000318"/>
    <property type="project" value="GO_Central"/>
</dbReference>
<dbReference type="GO" id="GO:0007186">
    <property type="term" value="P:G protein-coupled receptor signaling pathway"/>
    <property type="evidence" value="ECO:0000304"/>
    <property type="project" value="UniProtKB"/>
</dbReference>
<dbReference type="GO" id="GO:0007187">
    <property type="term" value="P:G protein-coupled receptor signaling pathway, coupled to cyclic nucleotide second messenger"/>
    <property type="evidence" value="ECO:0000318"/>
    <property type="project" value="GO_Central"/>
</dbReference>
<dbReference type="CDD" id="cd15067">
    <property type="entry name" value="7tmA_Dop1R2-like"/>
    <property type="match status" value="1"/>
</dbReference>
<dbReference type="FunFam" id="1.20.1070.10:FF:000631">
    <property type="entry name" value="Dopamine receptor 4"/>
    <property type="match status" value="1"/>
</dbReference>
<dbReference type="Gene3D" id="1.20.1070.10">
    <property type="entry name" value="Rhodopsin 7-helix transmembrane proteins"/>
    <property type="match status" value="2"/>
</dbReference>
<dbReference type="InterPro" id="IPR000276">
    <property type="entry name" value="GPCR_Rhodpsn"/>
</dbReference>
<dbReference type="InterPro" id="IPR017452">
    <property type="entry name" value="GPCR_Rhodpsn_7TM"/>
</dbReference>
<dbReference type="PANTHER" id="PTHR24248">
    <property type="entry name" value="ADRENERGIC RECEPTOR-RELATED G-PROTEIN COUPLED RECEPTOR"/>
    <property type="match status" value="1"/>
</dbReference>
<dbReference type="PANTHER" id="PTHR24248:SF185">
    <property type="entry name" value="DOPAMINE RECEPTOR 2"/>
    <property type="match status" value="1"/>
</dbReference>
<dbReference type="Pfam" id="PF00001">
    <property type="entry name" value="7tm_1"/>
    <property type="match status" value="1"/>
</dbReference>
<dbReference type="PRINTS" id="PR00237">
    <property type="entry name" value="GPCRRHODOPSN"/>
</dbReference>
<dbReference type="SMART" id="SM01381">
    <property type="entry name" value="7TM_GPCR_Srsx"/>
    <property type="match status" value="1"/>
</dbReference>
<dbReference type="SUPFAM" id="SSF81321">
    <property type="entry name" value="Family A G protein-coupled receptor-like"/>
    <property type="match status" value="1"/>
</dbReference>
<dbReference type="PROSITE" id="PS50262">
    <property type="entry name" value="G_PROTEIN_RECEP_F1_2"/>
    <property type="match status" value="1"/>
</dbReference>
<sequence length="517" mass="58647">MLAYGSDPNAEDLYITMTPSVSTENDTTVWATEEPAAIVWRHPLLAIALFSICLLTVAGNCLVVIAVCTKKYLRNPTGYLIISLAIADLIVGVIVMPMNSLFEIANHTWLFGLMMCDVFHAMDILASTASIWNLCVISLDRYMAGQDPIGYRDKVSKRRILMAILSVWVLSAILSFPGIIWWRTSSPHLYEDQSQCLFTDSKMYVSFSSLVSFYIPLFLILFAYGKVYIIATRHSKGMRMGIKTVSIKKRNGKKSNTETESILSSENEPTLRIHFGRGKQSSSSLRNSRFHARESTRLLLKQVSCKSLNDRGEHNNNNTVRQPLLRGTEGCHSDSISRSSQRNFRGRNVTIGSNCSSTLLQVDQPDRMSLSSNSQMVMTSPLSTRRKLNVREKSRQMMRYVHEQRAARTLSIVVGAFILCWTPFFVFTPLTAFCESCFSNKETIFTFVTWAGHLNSMLNPLIYSRFSRDFRRAFKQILTCQRQQKVKTAFKTPLSLVFTQLISVTQMWEQPPNTSIE</sequence>
<protein>
    <recommendedName>
        <fullName>Dopamine receptor 4</fullName>
    </recommendedName>
</protein>
<keyword id="KW-1003">Cell membrane</keyword>
<keyword id="KW-0297">G-protein coupled receptor</keyword>
<keyword id="KW-0325">Glycoprotein</keyword>
<keyword id="KW-0472">Membrane</keyword>
<keyword id="KW-0675">Receptor</keyword>
<keyword id="KW-1185">Reference proteome</keyword>
<keyword id="KW-0807">Transducer</keyword>
<keyword id="KW-0812">Transmembrane</keyword>
<keyword id="KW-1133">Transmembrane helix</keyword>
<proteinExistence type="evidence at transcript level"/>
<feature type="chain" id="PRO_0000070238" description="Dopamine receptor 4">
    <location>
        <begin position="1"/>
        <end position="517"/>
    </location>
</feature>
<feature type="topological domain" description="Extracellular" evidence="1">
    <location>
        <begin position="1"/>
        <end position="46"/>
    </location>
</feature>
<feature type="transmembrane region" description="Helical; Name=1" evidence="1">
    <location>
        <begin position="47"/>
        <end position="67"/>
    </location>
</feature>
<feature type="topological domain" description="Cytoplasmic" evidence="1">
    <location>
        <begin position="68"/>
        <end position="77"/>
    </location>
</feature>
<feature type="transmembrane region" description="Helical; Name=2" evidence="1">
    <location>
        <begin position="78"/>
        <end position="98"/>
    </location>
</feature>
<feature type="topological domain" description="Extracellular" evidence="1">
    <location>
        <begin position="99"/>
        <end position="108"/>
    </location>
</feature>
<feature type="transmembrane region" description="Helical; Name=3" evidence="1">
    <location>
        <begin position="109"/>
        <end position="129"/>
    </location>
</feature>
<feature type="topological domain" description="Cytoplasmic" evidence="1">
    <location>
        <begin position="130"/>
        <end position="159"/>
    </location>
</feature>
<feature type="transmembrane region" description="Helical; Name=4" evidence="1">
    <location>
        <begin position="160"/>
        <end position="180"/>
    </location>
</feature>
<feature type="topological domain" description="Extracellular" evidence="1">
    <location>
        <begin position="181"/>
        <end position="209"/>
    </location>
</feature>
<feature type="transmembrane region" description="Helical; Name=5" evidence="1">
    <location>
        <begin position="210"/>
        <end position="230"/>
    </location>
</feature>
<feature type="topological domain" description="Cytoplasmic" evidence="1">
    <location>
        <begin position="231"/>
        <end position="409"/>
    </location>
</feature>
<feature type="transmembrane region" description="Helical; Name=6" evidence="1">
    <location>
        <begin position="410"/>
        <end position="430"/>
    </location>
</feature>
<feature type="topological domain" description="Extracellular" evidence="1">
    <location>
        <begin position="431"/>
        <end position="442"/>
    </location>
</feature>
<feature type="transmembrane region" description="Helical; Name=7" evidence="1">
    <location>
        <begin position="443"/>
        <end position="463"/>
    </location>
</feature>
<feature type="topological domain" description="Cytoplasmic" evidence="1">
    <location>
        <begin position="464"/>
        <end position="517"/>
    </location>
</feature>
<feature type="region of interest" description="Disordered" evidence="3">
    <location>
        <begin position="309"/>
        <end position="339"/>
    </location>
</feature>
<feature type="glycosylation site" description="N-linked (GlcNAc...) asparagine" evidence="1">
    <location>
        <position position="25"/>
    </location>
</feature>
<feature type="glycosylation site" description="N-linked (GlcNAc...) asparagine" evidence="1">
    <location>
        <position position="106"/>
    </location>
</feature>
<name>DOPR4_CAEEL</name>
<reference key="1">
    <citation type="journal article" date="2005" name="J. Neurochem.">
        <title>Characterization of a novel D2-like dopamine receptor with a truncated splice variant and a D1-like dopamine receptor unique to invertebrates from Caenorhabditis elegans.</title>
        <authorList>
            <person name="Sugiura M."/>
            <person name="Fuke S."/>
            <person name="Suo S."/>
            <person name="Sasagawa N."/>
            <person name="Van Tol H.H.M."/>
            <person name="Ishiura S."/>
        </authorList>
    </citation>
    <scope>NUCLEOTIDE SEQUENCE [MRNA]</scope>
    <scope>FUNCTION</scope>
    <scope>TISSUE SPECIFICITY</scope>
</reference>
<reference key="2">
    <citation type="journal article" date="1998" name="Science">
        <title>Genome sequence of the nematode C. elegans: a platform for investigating biology.</title>
        <authorList>
            <consortium name="The C. elegans sequencing consortium"/>
        </authorList>
    </citation>
    <scope>NUCLEOTIDE SEQUENCE [LARGE SCALE GENOMIC DNA]</scope>
    <source>
        <strain>Bristol N2</strain>
    </source>
</reference>
<organism>
    <name type="scientific">Caenorhabditis elegans</name>
    <dbReference type="NCBI Taxonomy" id="6239"/>
    <lineage>
        <taxon>Eukaryota</taxon>
        <taxon>Metazoa</taxon>
        <taxon>Ecdysozoa</taxon>
        <taxon>Nematoda</taxon>
        <taxon>Chromadorea</taxon>
        <taxon>Rhabditida</taxon>
        <taxon>Rhabditina</taxon>
        <taxon>Rhabditomorpha</taxon>
        <taxon>Rhabditoidea</taxon>
        <taxon>Rhabditidae</taxon>
        <taxon>Peloderinae</taxon>
        <taxon>Caenorhabditis</taxon>
    </lineage>
</organism>
<gene>
    <name type="primary">dop-4</name>
    <name type="ORF">C52B11.3</name>
</gene>
<comment type="function">
    <text evidence="4">Receptor for dopamine. The activity of this receptor is mediated by G proteins which activate adenylyl cyclase. In terms of antagonist responses, would be classed with the D1-like dopamine receptor group.</text>
</comment>
<comment type="subcellular location">
    <subcellularLocation>
        <location evidence="5">Cell membrane</location>
        <topology evidence="5">Multi-pass membrane protein</topology>
    </subcellularLocation>
</comment>
<comment type="tissue specificity">
    <text evidence="4">Expressed in pharyngeal neurons I1 and I2, neurons ASG, AVL, CAN, PQR, vulva, intestine, rectal glands and rectal epithelial glands. Also expressed in neurons in ray 8 in males.</text>
</comment>
<comment type="similarity">
    <text evidence="2">Belongs to the G-protein coupled receptor 1 family.</text>
</comment>
<evidence type="ECO:0000255" key="1"/>
<evidence type="ECO:0000255" key="2">
    <source>
        <dbReference type="PROSITE-ProRule" id="PRU00521"/>
    </source>
</evidence>
<evidence type="ECO:0000256" key="3">
    <source>
        <dbReference type="SAM" id="MobiDB-lite"/>
    </source>
</evidence>
<evidence type="ECO:0000269" key="4">
    <source>
    </source>
</evidence>
<evidence type="ECO:0000305" key="5"/>